<organism>
    <name type="scientific">Synechococcus elongatus (strain ATCC 33912 / PCC 7942 / FACHB-805)</name>
    <name type="common">Anacystis nidulans R2</name>
    <dbReference type="NCBI Taxonomy" id="1140"/>
    <lineage>
        <taxon>Bacteria</taxon>
        <taxon>Bacillati</taxon>
        <taxon>Cyanobacteriota</taxon>
        <taxon>Cyanophyceae</taxon>
        <taxon>Synechococcales</taxon>
        <taxon>Synechococcaceae</taxon>
        <taxon>Synechococcus</taxon>
    </lineage>
</organism>
<feature type="chain" id="PRO_0000352197" description="NAD(P)H-quinone oxidoreductase subunit M">
    <location>
        <begin position="1"/>
        <end position="110"/>
    </location>
</feature>
<comment type="function">
    <text evidence="1">NDH-1 shuttles electrons from an unknown electron donor, via FMN and iron-sulfur (Fe-S) centers, to quinones in the respiratory and/or the photosynthetic chain. The immediate electron acceptor for the enzyme in this species is believed to be plastoquinone. Couples the redox reaction to proton translocation, and thus conserves the redox energy in a proton gradient. Cyanobacterial NDH-1 also plays a role in inorganic carbon-concentration.</text>
</comment>
<comment type="catalytic activity">
    <reaction evidence="1">
        <text>a plastoquinone + NADH + (n+1) H(+)(in) = a plastoquinol + NAD(+) + n H(+)(out)</text>
        <dbReference type="Rhea" id="RHEA:42608"/>
        <dbReference type="Rhea" id="RHEA-COMP:9561"/>
        <dbReference type="Rhea" id="RHEA-COMP:9562"/>
        <dbReference type="ChEBI" id="CHEBI:15378"/>
        <dbReference type="ChEBI" id="CHEBI:17757"/>
        <dbReference type="ChEBI" id="CHEBI:57540"/>
        <dbReference type="ChEBI" id="CHEBI:57945"/>
        <dbReference type="ChEBI" id="CHEBI:62192"/>
    </reaction>
</comment>
<comment type="catalytic activity">
    <reaction evidence="1">
        <text>a plastoquinone + NADPH + (n+1) H(+)(in) = a plastoquinol + NADP(+) + n H(+)(out)</text>
        <dbReference type="Rhea" id="RHEA:42612"/>
        <dbReference type="Rhea" id="RHEA-COMP:9561"/>
        <dbReference type="Rhea" id="RHEA-COMP:9562"/>
        <dbReference type="ChEBI" id="CHEBI:15378"/>
        <dbReference type="ChEBI" id="CHEBI:17757"/>
        <dbReference type="ChEBI" id="CHEBI:57783"/>
        <dbReference type="ChEBI" id="CHEBI:58349"/>
        <dbReference type="ChEBI" id="CHEBI:62192"/>
    </reaction>
</comment>
<comment type="subunit">
    <text evidence="1">NDH-1 can be composed of about 15 different subunits; different subcomplexes with different compositions have been identified which probably have different functions.</text>
</comment>
<comment type="subcellular location">
    <subcellularLocation>
        <location evidence="1">Cellular thylakoid membrane</location>
        <topology evidence="1">Peripheral membrane protein</topology>
        <orientation evidence="1">Cytoplasmic side</orientation>
    </subcellularLocation>
</comment>
<comment type="similarity">
    <text evidence="1">Belongs to the complex I NdhM subunit family.</text>
</comment>
<accession>Q31LQ7</accession>
<gene>
    <name evidence="1" type="primary">ndhM</name>
    <name type="ordered locus">Synpcc7942_1982</name>
</gene>
<name>NDHM_SYNE7</name>
<keyword id="KW-0472">Membrane</keyword>
<keyword id="KW-0520">NAD</keyword>
<keyword id="KW-0521">NADP</keyword>
<keyword id="KW-0618">Plastoquinone</keyword>
<keyword id="KW-0874">Quinone</keyword>
<keyword id="KW-1185">Reference proteome</keyword>
<keyword id="KW-0793">Thylakoid</keyword>
<keyword id="KW-1278">Translocase</keyword>
<keyword id="KW-0813">Transport</keyword>
<sequence>MLLKSTTRHIRIFTAEIEGNELQPSDTVLTLDVDPDNEFNWNEEALQKVYRQFDDLVESYAGQELSEYNLRRIGSELEVLLRQMLQAGEISYNLNCRVLNYSMGVPQAVV</sequence>
<proteinExistence type="inferred from homology"/>
<evidence type="ECO:0000255" key="1">
    <source>
        <dbReference type="HAMAP-Rule" id="MF_01352"/>
    </source>
</evidence>
<dbReference type="EC" id="7.1.1.-" evidence="1"/>
<dbReference type="EMBL" id="CP000100">
    <property type="protein sequence ID" value="ABB58012.1"/>
    <property type="molecule type" value="Genomic_DNA"/>
</dbReference>
<dbReference type="RefSeq" id="WP_011244424.1">
    <property type="nucleotide sequence ID" value="NZ_JACJTX010000001.1"/>
</dbReference>
<dbReference type="SMR" id="Q31LQ7"/>
<dbReference type="STRING" id="1140.Synpcc7942_1982"/>
<dbReference type="PaxDb" id="1140-Synpcc7942_1982"/>
<dbReference type="KEGG" id="syf:Synpcc7942_1982"/>
<dbReference type="eggNOG" id="ENOG5031AQM">
    <property type="taxonomic scope" value="Bacteria"/>
</dbReference>
<dbReference type="HOGENOM" id="CLU_137431_0_0_3"/>
<dbReference type="OrthoDB" id="461686at2"/>
<dbReference type="BioCyc" id="MetaCyc:SYNPCC7942_1982-MONOMER"/>
<dbReference type="BioCyc" id="SYNEL:SYNPCC7942_1982-MONOMER"/>
<dbReference type="Proteomes" id="UP000889800">
    <property type="component" value="Chromosome"/>
</dbReference>
<dbReference type="GO" id="GO:0031676">
    <property type="term" value="C:plasma membrane-derived thylakoid membrane"/>
    <property type="evidence" value="ECO:0007669"/>
    <property type="project" value="UniProtKB-SubCell"/>
</dbReference>
<dbReference type="GO" id="GO:0016655">
    <property type="term" value="F:oxidoreductase activity, acting on NAD(P)H, quinone or similar compound as acceptor"/>
    <property type="evidence" value="ECO:0007669"/>
    <property type="project" value="UniProtKB-UniRule"/>
</dbReference>
<dbReference type="GO" id="GO:0048038">
    <property type="term" value="F:quinone binding"/>
    <property type="evidence" value="ECO:0007669"/>
    <property type="project" value="UniProtKB-KW"/>
</dbReference>
<dbReference type="HAMAP" id="MF_01352">
    <property type="entry name" value="NDH1_NDH1M"/>
    <property type="match status" value="1"/>
</dbReference>
<dbReference type="InterPro" id="IPR018922">
    <property type="entry name" value="NdhM"/>
</dbReference>
<dbReference type="PANTHER" id="PTHR36900">
    <property type="entry name" value="NAD(P)H-QUINONE OXIDOREDUCTASE SUBUNIT M, CHLOROPLASTIC"/>
    <property type="match status" value="1"/>
</dbReference>
<dbReference type="PANTHER" id="PTHR36900:SF1">
    <property type="entry name" value="NAD(P)H-QUINONE OXIDOREDUCTASE SUBUNIT M, CHLOROPLASTIC"/>
    <property type="match status" value="1"/>
</dbReference>
<dbReference type="Pfam" id="PF10664">
    <property type="entry name" value="NdhM"/>
    <property type="match status" value="1"/>
</dbReference>
<reference key="1">
    <citation type="submission" date="2005-08" db="EMBL/GenBank/DDBJ databases">
        <title>Complete sequence of chromosome 1 of Synechococcus elongatus PCC 7942.</title>
        <authorList>
            <consortium name="US DOE Joint Genome Institute"/>
            <person name="Copeland A."/>
            <person name="Lucas S."/>
            <person name="Lapidus A."/>
            <person name="Barry K."/>
            <person name="Detter J.C."/>
            <person name="Glavina T."/>
            <person name="Hammon N."/>
            <person name="Israni S."/>
            <person name="Pitluck S."/>
            <person name="Schmutz J."/>
            <person name="Larimer F."/>
            <person name="Land M."/>
            <person name="Kyrpides N."/>
            <person name="Lykidis A."/>
            <person name="Golden S."/>
            <person name="Richardson P."/>
        </authorList>
    </citation>
    <scope>NUCLEOTIDE SEQUENCE [LARGE SCALE GENOMIC DNA]</scope>
    <source>
        <strain>ATCC 33912 / PCC 7942 / FACHB-805</strain>
    </source>
</reference>
<protein>
    <recommendedName>
        <fullName evidence="1">NAD(P)H-quinone oxidoreductase subunit M</fullName>
        <ecNumber evidence="1">7.1.1.-</ecNumber>
    </recommendedName>
    <alternativeName>
        <fullName evidence="1">NAD(P)H dehydrogenase I subunit M</fullName>
        <shortName evidence="1">NDH-1 subunit M</shortName>
        <shortName evidence="1">NDH-M</shortName>
    </alternativeName>
</protein>